<proteinExistence type="evidence at transcript level"/>
<feature type="chain" id="PRO_0000281156" description="NADH dehydrogenase [ubiquinone] 1 alpha subcomplex assembly factor 3">
    <location>
        <begin position="1"/>
        <end position="174"/>
    </location>
</feature>
<reference key="1">
    <citation type="submission" date="2006-12" db="EMBL/GenBank/DDBJ databases">
        <authorList>
            <consortium name="NIH - Zebrafish Gene Collection (ZGC) project"/>
        </authorList>
    </citation>
    <scope>NUCLEOTIDE SEQUENCE [LARGE SCALE MRNA]</scope>
    <source>
        <tissue>Heart</tissue>
    </source>
</reference>
<keyword id="KW-0472">Membrane</keyword>
<keyword id="KW-0496">Mitochondrion</keyword>
<keyword id="KW-0999">Mitochondrion inner membrane</keyword>
<keyword id="KW-0539">Nucleus</keyword>
<keyword id="KW-1185">Reference proteome</keyword>
<sequence>MAAVRHLCQRTAIRLRLTCSPQSRVCVVRGHRLGPFDDEQYRKTSVSIMQKEASAGTVIYSYSPRGFNINGNTVFGPCAVLPPAILQWNVGSHSDISVESLSLFYLLEPQIEVLVLGTGARTERLHAEVLEELKKRGIAVEVQDTPNACATFNFLSSEKRLAAAALIPPPAGSR</sequence>
<gene>
    <name type="primary">ndufaf3</name>
    <name type="ORF">zgc:153176</name>
</gene>
<dbReference type="EMBL" id="BC129030">
    <property type="protein sequence ID" value="AAI29031.1"/>
    <property type="molecule type" value="mRNA"/>
</dbReference>
<dbReference type="RefSeq" id="NP_001074084.1">
    <property type="nucleotide sequence ID" value="NM_001080615.1"/>
</dbReference>
<dbReference type="RefSeq" id="NP_001417798.1">
    <property type="nucleotide sequence ID" value="NM_001430869.1"/>
</dbReference>
<dbReference type="SMR" id="A1L1F1"/>
<dbReference type="FunCoup" id="A1L1F1">
    <property type="interactions" value="1565"/>
</dbReference>
<dbReference type="STRING" id="7955.ENSDARP00000156172"/>
<dbReference type="PaxDb" id="7955-ENSDARP00000109973"/>
<dbReference type="PeptideAtlas" id="A1L1F1"/>
<dbReference type="Ensembl" id="ENSDART00000161432">
    <property type="protein sequence ID" value="ENSDARP00000134881"/>
    <property type="gene ID" value="ENSDARG00000112931"/>
</dbReference>
<dbReference type="Ensembl" id="ENSDART00000184883">
    <property type="protein sequence ID" value="ENSDARP00000156172"/>
    <property type="gene ID" value="ENSDARG00000112931"/>
</dbReference>
<dbReference type="GeneID" id="791133"/>
<dbReference type="AGR" id="ZFIN:ZDB-GENE-070112-282"/>
<dbReference type="ZFIN" id="ZDB-GENE-070112-282">
    <property type="gene designation" value="ndufaf3"/>
</dbReference>
<dbReference type="eggNOG" id="KOG3363">
    <property type="taxonomic scope" value="Eukaryota"/>
</dbReference>
<dbReference type="InParanoid" id="A1L1F1"/>
<dbReference type="OMA" id="FSKAYDH"/>
<dbReference type="OrthoDB" id="20681at2759"/>
<dbReference type="PhylomeDB" id="A1L1F1"/>
<dbReference type="TreeFam" id="TF321072"/>
<dbReference type="PRO" id="PR:A1L1F1"/>
<dbReference type="Proteomes" id="UP000000437">
    <property type="component" value="Chromosome 22"/>
</dbReference>
<dbReference type="Bgee" id="ENSDARG00000112931">
    <property type="expression patterns" value="Expressed in muscle tissue and 24 other cell types or tissues"/>
</dbReference>
<dbReference type="ExpressionAtlas" id="A1L1F1">
    <property type="expression patterns" value="baseline and differential"/>
</dbReference>
<dbReference type="GO" id="GO:0005743">
    <property type="term" value="C:mitochondrial inner membrane"/>
    <property type="evidence" value="ECO:0000318"/>
    <property type="project" value="GO_Central"/>
</dbReference>
<dbReference type="GO" id="GO:0005634">
    <property type="term" value="C:nucleus"/>
    <property type="evidence" value="ECO:0007669"/>
    <property type="project" value="UniProtKB-SubCell"/>
</dbReference>
<dbReference type="GO" id="GO:0032981">
    <property type="term" value="P:mitochondrial respiratory chain complex I assembly"/>
    <property type="evidence" value="ECO:0000318"/>
    <property type="project" value="GO_Central"/>
</dbReference>
<dbReference type="CDD" id="cd05125">
    <property type="entry name" value="Mth938_2P1-like"/>
    <property type="match status" value="1"/>
</dbReference>
<dbReference type="FunFam" id="3.40.1230.10:FF:000002">
    <property type="entry name" value="NADH dehydrogenase [ubiquinone] 1 alpha subcomplex assembly factor 3"/>
    <property type="match status" value="1"/>
</dbReference>
<dbReference type="Gene3D" id="3.40.1230.10">
    <property type="entry name" value="MTH938-like"/>
    <property type="match status" value="1"/>
</dbReference>
<dbReference type="InterPro" id="IPR036748">
    <property type="entry name" value="MTH938-like_sf"/>
</dbReference>
<dbReference type="InterPro" id="IPR034095">
    <property type="entry name" value="NDUF3"/>
</dbReference>
<dbReference type="InterPro" id="IPR007523">
    <property type="entry name" value="NDUFAF3/AAMDC"/>
</dbReference>
<dbReference type="PANTHER" id="PTHR21192:SF2">
    <property type="entry name" value="NADH DEHYDROGENASE [UBIQUINONE] 1 ALPHA SUBCOMPLEX ASSEMBLY FACTOR 3"/>
    <property type="match status" value="1"/>
</dbReference>
<dbReference type="PANTHER" id="PTHR21192">
    <property type="entry name" value="NUCLEAR PROTEIN E3-3"/>
    <property type="match status" value="1"/>
</dbReference>
<dbReference type="Pfam" id="PF04430">
    <property type="entry name" value="DUF498"/>
    <property type="match status" value="1"/>
</dbReference>
<dbReference type="SUPFAM" id="SSF64076">
    <property type="entry name" value="MTH938-like"/>
    <property type="match status" value="1"/>
</dbReference>
<accession>A1L1F1</accession>
<protein>
    <recommendedName>
        <fullName>NADH dehydrogenase [ubiquinone] 1 alpha subcomplex assembly factor 3</fullName>
    </recommendedName>
</protein>
<comment type="function">
    <text evidence="1">Essential factor for the assembly of mitochondrial NADH:ubiquinone oxidoreductase complex (complex I).</text>
</comment>
<comment type="subcellular location">
    <subcellularLocation>
        <location evidence="1">Nucleus</location>
    </subcellularLocation>
    <subcellularLocation>
        <location evidence="1">Mitochondrion inner membrane</location>
    </subcellularLocation>
</comment>
<comment type="similarity">
    <text evidence="2">Belongs to the NDUFAF3 family.</text>
</comment>
<organism>
    <name type="scientific">Danio rerio</name>
    <name type="common">Zebrafish</name>
    <name type="synonym">Brachydanio rerio</name>
    <dbReference type="NCBI Taxonomy" id="7955"/>
    <lineage>
        <taxon>Eukaryota</taxon>
        <taxon>Metazoa</taxon>
        <taxon>Chordata</taxon>
        <taxon>Craniata</taxon>
        <taxon>Vertebrata</taxon>
        <taxon>Euteleostomi</taxon>
        <taxon>Actinopterygii</taxon>
        <taxon>Neopterygii</taxon>
        <taxon>Teleostei</taxon>
        <taxon>Ostariophysi</taxon>
        <taxon>Cypriniformes</taxon>
        <taxon>Danionidae</taxon>
        <taxon>Danioninae</taxon>
        <taxon>Danio</taxon>
    </lineage>
</organism>
<evidence type="ECO:0000250" key="1"/>
<evidence type="ECO:0000305" key="2"/>
<name>NDUF3_DANRE</name>